<feature type="chain" id="PRO_0000448162" description="Protein OPG157">
    <location>
        <begin position="1"/>
        <end position="77"/>
    </location>
</feature>
<feature type="region of interest" description="Disordered" evidence="2">
    <location>
        <begin position="53"/>
        <end position="77"/>
    </location>
</feature>
<reference key="1">
    <citation type="journal article" date="1992" name="J. Gen. Virol.">
        <title>Nucleotide sequence of 21.8 kbp of variola major virus strain Harvey and comparison with vaccinia virus.</title>
        <authorList>
            <person name="Aguado B."/>
            <person name="Selmes I.P."/>
            <person name="Smith G.L."/>
        </authorList>
    </citation>
    <scope>NUCLEOTIDE SEQUENCE [GENOMIC DNA]</scope>
    <source>
        <strain>Harvey</strain>
    </source>
</reference>
<reference key="2">
    <citation type="journal article" date="1993" name="Nature">
        <title>Potential virulence determinants in terminal regions of variola smallpox virus genome.</title>
        <authorList>
            <person name="Massung R.F."/>
            <person name="Esposito J.J."/>
            <person name="Liu L.I."/>
            <person name="Qi J."/>
            <person name="Utterback T.R."/>
            <person name="Knight J.C."/>
            <person name="Aubin L."/>
            <person name="Yuran T.E."/>
            <person name="Parsons J.M."/>
            <person name="Loparev V.N."/>
            <person name="Selivanov N.A."/>
            <person name="Cavallaro K.F."/>
            <person name="Kerlavage A.R."/>
            <person name="Mahy B.W.J."/>
            <person name="Venter J.C."/>
        </authorList>
    </citation>
    <scope>NUCLEOTIDE SEQUENCE [GENOMIC DNA]</scope>
    <source>
        <strain>Bangladesh-1975</strain>
    </source>
</reference>
<reference key="3">
    <citation type="submission" date="1995-12" db="EMBL/GenBank/DDBJ databases">
        <authorList>
            <person name="Shchelkunov S.N."/>
            <person name="Totmenin A.V."/>
            <person name="Resenchuk S.M."/>
            <person name="Blinov V.M."/>
            <person name="Sandakhchiev L.S."/>
        </authorList>
    </citation>
    <scope>NUCLEOTIDE SEQUENCE [GENOMIC DNA]</scope>
    <source>
        <strain>Garcia-1966</strain>
    </source>
</reference>
<sequence length="77" mass="8745">MEDLNEANFSHLLINLSNNKDIDAQYASTLSVVHELLSAINFKIFNINKKSKKNSKSIEQHPVVHHAASAGREFNRR</sequence>
<gene>
    <name type="primary">OPG157</name>
    <name type="ORF">A30L</name>
    <name type="ORF">A33L</name>
</gene>
<keyword id="KW-0597">Phosphoprotein</keyword>
<evidence type="ECO:0000250" key="1">
    <source>
        <dbReference type="UniProtKB" id="P68596"/>
    </source>
</evidence>
<evidence type="ECO:0000256" key="2">
    <source>
        <dbReference type="SAM" id="MobiDB-lite"/>
    </source>
</evidence>
<evidence type="ECO:0000305" key="3"/>
<comment type="function">
    <text evidence="1">Required for the association between the dense viroplasm and the viral membranes to form the mature virion (MV).</text>
</comment>
<comment type="subunit">
    <text evidence="1">Interacts with protein OPG092; the interaction stabilizes both proteins. Interacts with protein OPG062.</text>
</comment>
<comment type="PTM">
    <text evidence="1">Phosphorylated by viral OPG054 kinase.</text>
</comment>
<comment type="similarity">
    <text evidence="3">Belongs to the orthopoxvirus OPG157 family.</text>
</comment>
<dbReference type="EMBL" id="L22579">
    <property type="protein sequence ID" value="AAA60885.1"/>
    <property type="molecule type" value="Genomic_DNA"/>
</dbReference>
<dbReference type="EMBL" id="X76266">
    <property type="protein sequence ID" value="CAA53859.1"/>
    <property type="molecule type" value="Genomic_DNA"/>
</dbReference>
<dbReference type="PIR" id="G72167">
    <property type="entry name" value="G72167"/>
</dbReference>
<dbReference type="PIR" id="T28575">
    <property type="entry name" value="T28575"/>
</dbReference>
<dbReference type="RefSeq" id="NP_042181.1">
    <property type="nucleotide sequence ID" value="NC_001611.1"/>
</dbReference>
<dbReference type="GeneID" id="1486511"/>
<dbReference type="KEGG" id="vg:1486511"/>
<dbReference type="Proteomes" id="UP000119805">
    <property type="component" value="Segment"/>
</dbReference>
<dbReference type="InterPro" id="IPR009257">
    <property type="entry name" value="Chordopox_A30L"/>
</dbReference>
<dbReference type="Pfam" id="PF06015">
    <property type="entry name" value="Chordopox_A30L"/>
    <property type="match status" value="1"/>
</dbReference>
<name>PG157_VARV</name>
<proteinExistence type="inferred from homology"/>
<protein>
    <recommendedName>
        <fullName>Protein OPG157</fullName>
    </recommendedName>
    <alternativeName>
        <fullName>Protein A33</fullName>
    </alternativeName>
</protein>
<organism>
    <name type="scientific">Variola virus</name>
    <dbReference type="NCBI Taxonomy" id="10255"/>
    <lineage>
        <taxon>Viruses</taxon>
        <taxon>Varidnaviria</taxon>
        <taxon>Bamfordvirae</taxon>
        <taxon>Nucleocytoviricota</taxon>
        <taxon>Pokkesviricetes</taxon>
        <taxon>Chitovirales</taxon>
        <taxon>Poxviridae</taxon>
        <taxon>Chordopoxvirinae</taxon>
        <taxon>Orthopoxvirus</taxon>
    </lineage>
</organism>
<organismHost>
    <name type="scientific">Homo sapiens</name>
    <name type="common">Human</name>
    <dbReference type="NCBI Taxonomy" id="9606"/>
</organismHost>
<accession>P0DOU0</accession>
<accession>P21088</accession>
<accession>P68597</accession>